<keyword id="KW-0227">DNA damage</keyword>
<keyword id="KW-0233">DNA recombination</keyword>
<keyword id="KW-0234">DNA repair</keyword>
<keyword id="KW-1185">Reference proteome</keyword>
<accession>Q2KAD9</accession>
<proteinExistence type="inferred from homology"/>
<sequence>MQWQDQAIILGVKRHGETSVIAEVMTRGRGRHLGLVRSGRSRAMRPVLQPGNAVEVVWRARLDEHLGEFRVEPVTLRAARLMDTATAVYGVQAMGALLRLLPERDPHPHLFDALEVILDHLHNPADAGELFVRFELAVLNDLGFGLDLAECAATGARSDLAYVSPKSGRAVSRSAGAPWADKMLLLPPFLGVEGNHAADVDSLAAAFRLTGFFLHRHVYEPRGIEAVAARDGFVQAALKALNPASQTLSSPNGVSA</sequence>
<organism>
    <name type="scientific">Rhizobium etli (strain ATCC 51251 / DSM 11541 / JCM 21823 / NBRC 15573 / CFN 42)</name>
    <dbReference type="NCBI Taxonomy" id="347834"/>
    <lineage>
        <taxon>Bacteria</taxon>
        <taxon>Pseudomonadati</taxon>
        <taxon>Pseudomonadota</taxon>
        <taxon>Alphaproteobacteria</taxon>
        <taxon>Hyphomicrobiales</taxon>
        <taxon>Rhizobiaceae</taxon>
        <taxon>Rhizobium/Agrobacterium group</taxon>
        <taxon>Rhizobium</taxon>
    </lineage>
</organism>
<name>RECO_RHIEC</name>
<gene>
    <name evidence="1" type="primary">recO</name>
    <name type="ordered locus">RHE_CH01394</name>
</gene>
<dbReference type="EMBL" id="CP000133">
    <property type="protein sequence ID" value="ABC90197.1"/>
    <property type="molecule type" value="Genomic_DNA"/>
</dbReference>
<dbReference type="RefSeq" id="WP_011424729.1">
    <property type="nucleotide sequence ID" value="NC_007761.1"/>
</dbReference>
<dbReference type="SMR" id="Q2KAD9"/>
<dbReference type="KEGG" id="ret:RHE_CH01394"/>
<dbReference type="eggNOG" id="COG1381">
    <property type="taxonomic scope" value="Bacteria"/>
</dbReference>
<dbReference type="HOGENOM" id="CLU_086029_0_0_5"/>
<dbReference type="OrthoDB" id="9804792at2"/>
<dbReference type="Proteomes" id="UP000001936">
    <property type="component" value="Chromosome"/>
</dbReference>
<dbReference type="GO" id="GO:0043590">
    <property type="term" value="C:bacterial nucleoid"/>
    <property type="evidence" value="ECO:0007669"/>
    <property type="project" value="TreeGrafter"/>
</dbReference>
<dbReference type="GO" id="GO:0006310">
    <property type="term" value="P:DNA recombination"/>
    <property type="evidence" value="ECO:0007669"/>
    <property type="project" value="UniProtKB-UniRule"/>
</dbReference>
<dbReference type="GO" id="GO:0006302">
    <property type="term" value="P:double-strand break repair"/>
    <property type="evidence" value="ECO:0007669"/>
    <property type="project" value="TreeGrafter"/>
</dbReference>
<dbReference type="Gene3D" id="2.40.50.140">
    <property type="entry name" value="Nucleic acid-binding proteins"/>
    <property type="match status" value="1"/>
</dbReference>
<dbReference type="Gene3D" id="1.20.1440.120">
    <property type="entry name" value="Recombination protein O, C-terminal domain"/>
    <property type="match status" value="1"/>
</dbReference>
<dbReference type="HAMAP" id="MF_00201">
    <property type="entry name" value="RecO"/>
    <property type="match status" value="1"/>
</dbReference>
<dbReference type="InterPro" id="IPR037278">
    <property type="entry name" value="ARFGAP/RecO"/>
</dbReference>
<dbReference type="InterPro" id="IPR022572">
    <property type="entry name" value="DNA_rep/recomb_RecO_N"/>
</dbReference>
<dbReference type="InterPro" id="IPR012340">
    <property type="entry name" value="NA-bd_OB-fold"/>
</dbReference>
<dbReference type="InterPro" id="IPR003717">
    <property type="entry name" value="RecO"/>
</dbReference>
<dbReference type="InterPro" id="IPR042242">
    <property type="entry name" value="RecO_C"/>
</dbReference>
<dbReference type="NCBIfam" id="TIGR00613">
    <property type="entry name" value="reco"/>
    <property type="match status" value="1"/>
</dbReference>
<dbReference type="PANTHER" id="PTHR33991">
    <property type="entry name" value="DNA REPAIR PROTEIN RECO"/>
    <property type="match status" value="1"/>
</dbReference>
<dbReference type="PANTHER" id="PTHR33991:SF1">
    <property type="entry name" value="DNA REPAIR PROTEIN RECO"/>
    <property type="match status" value="1"/>
</dbReference>
<dbReference type="Pfam" id="PF02565">
    <property type="entry name" value="RecO_C"/>
    <property type="match status" value="1"/>
</dbReference>
<dbReference type="Pfam" id="PF11967">
    <property type="entry name" value="RecO_N"/>
    <property type="match status" value="1"/>
</dbReference>
<dbReference type="SUPFAM" id="SSF57863">
    <property type="entry name" value="ArfGap/RecO-like zinc finger"/>
    <property type="match status" value="1"/>
</dbReference>
<dbReference type="SUPFAM" id="SSF50249">
    <property type="entry name" value="Nucleic acid-binding proteins"/>
    <property type="match status" value="1"/>
</dbReference>
<feature type="chain" id="PRO_0000264833" description="DNA repair protein RecO">
    <location>
        <begin position="1"/>
        <end position="256"/>
    </location>
</feature>
<comment type="function">
    <text evidence="1">Involved in DNA repair and RecF pathway recombination.</text>
</comment>
<comment type="similarity">
    <text evidence="1">Belongs to the RecO family.</text>
</comment>
<reference key="1">
    <citation type="journal article" date="2006" name="Proc. Natl. Acad. Sci. U.S.A.">
        <title>The partitioned Rhizobium etli genome: genetic and metabolic redundancy in seven interacting replicons.</title>
        <authorList>
            <person name="Gonzalez V."/>
            <person name="Santamaria R.I."/>
            <person name="Bustos P."/>
            <person name="Hernandez-Gonzalez I."/>
            <person name="Medrano-Soto A."/>
            <person name="Moreno-Hagelsieb G."/>
            <person name="Janga S.C."/>
            <person name="Ramirez M.A."/>
            <person name="Jimenez-Jacinto V."/>
            <person name="Collado-Vides J."/>
            <person name="Davila G."/>
        </authorList>
    </citation>
    <scope>NUCLEOTIDE SEQUENCE [LARGE SCALE GENOMIC DNA]</scope>
    <source>
        <strain>ATCC 51251 / DSM 11541 / JCM 21823 / NBRC 15573 / CFN 42</strain>
    </source>
</reference>
<protein>
    <recommendedName>
        <fullName evidence="1">DNA repair protein RecO</fullName>
    </recommendedName>
    <alternativeName>
        <fullName evidence="1">Recombination protein O</fullName>
    </alternativeName>
</protein>
<evidence type="ECO:0000255" key="1">
    <source>
        <dbReference type="HAMAP-Rule" id="MF_00201"/>
    </source>
</evidence>